<comment type="function">
    <text evidence="1">Catalyzes the irreversible cleavage of the glycosidic bond in both 5'-methylthioadenosine (MTA) and S-adenosylhomocysteine (SAH/AdoHcy) to adenine and the corresponding thioribose, 5'-methylthioribose and S-ribosylhomocysteine, respectively. Also cleaves 5'-deoxyadenosine, a toxic by-product of radical S-adenosylmethionine (SAM) enzymes, into 5-deoxyribose and adenine.</text>
</comment>
<comment type="catalytic activity">
    <reaction evidence="1">
        <text>S-adenosyl-L-homocysteine + H2O = S-(5-deoxy-D-ribos-5-yl)-L-homocysteine + adenine</text>
        <dbReference type="Rhea" id="RHEA:17805"/>
        <dbReference type="ChEBI" id="CHEBI:15377"/>
        <dbReference type="ChEBI" id="CHEBI:16708"/>
        <dbReference type="ChEBI" id="CHEBI:57856"/>
        <dbReference type="ChEBI" id="CHEBI:58195"/>
        <dbReference type="EC" id="3.2.2.9"/>
    </reaction>
</comment>
<comment type="catalytic activity">
    <reaction evidence="1">
        <text>S-methyl-5'-thioadenosine + H2O = 5-(methylsulfanyl)-D-ribose + adenine</text>
        <dbReference type="Rhea" id="RHEA:13617"/>
        <dbReference type="ChEBI" id="CHEBI:15377"/>
        <dbReference type="ChEBI" id="CHEBI:16708"/>
        <dbReference type="ChEBI" id="CHEBI:17509"/>
        <dbReference type="ChEBI" id="CHEBI:78440"/>
        <dbReference type="EC" id="3.2.2.9"/>
    </reaction>
</comment>
<comment type="catalytic activity">
    <reaction evidence="1">
        <text>5'-deoxyadenosine + H2O = 5-deoxy-D-ribose + adenine</text>
        <dbReference type="Rhea" id="RHEA:29859"/>
        <dbReference type="ChEBI" id="CHEBI:15377"/>
        <dbReference type="ChEBI" id="CHEBI:16708"/>
        <dbReference type="ChEBI" id="CHEBI:17319"/>
        <dbReference type="ChEBI" id="CHEBI:149540"/>
        <dbReference type="EC" id="3.2.2.9"/>
    </reaction>
    <physiologicalReaction direction="left-to-right" evidence="1">
        <dbReference type="Rhea" id="RHEA:29860"/>
    </physiologicalReaction>
</comment>
<comment type="pathway">
    <text evidence="1">Amino-acid biosynthesis; L-methionine biosynthesis via salvage pathway; S-methyl-5-thio-alpha-D-ribose 1-phosphate from S-methyl-5'-thioadenosine (hydrolase route): step 1/2.</text>
</comment>
<comment type="similarity">
    <text evidence="1">Belongs to the PNP/UDP phosphorylase family. MtnN subfamily.</text>
</comment>
<sequence length="231" mass="24597">MKIGIIGAMEQEVAILKDKIEGLSTITKAGCTFYTGTLNGADVVLLQSGIGKVAAAVGTTLLIAEHNVDVVLNTGSAGGFDSSLNLGDVVISTEVRHHDADVTAFGYEMGQMAQQPAAFIADEKLITTAEQALTEMSDKHAVRGLICTGDVFVCTPERQEFIRTHFPSVIAVEMEASAIAQTCHQFNTPFVVVRAISDVADKESPMSFDEFLPLAAQSSSEMVLNMVTLLK</sequence>
<evidence type="ECO:0000255" key="1">
    <source>
        <dbReference type="HAMAP-Rule" id="MF_01684"/>
    </source>
</evidence>
<organism>
    <name type="scientific">Aliivibrio fischeri</name>
    <name type="common">Vibrio fischeri</name>
    <dbReference type="NCBI Taxonomy" id="668"/>
    <lineage>
        <taxon>Bacteria</taxon>
        <taxon>Pseudomonadati</taxon>
        <taxon>Pseudomonadota</taxon>
        <taxon>Gammaproteobacteria</taxon>
        <taxon>Vibrionales</taxon>
        <taxon>Vibrionaceae</taxon>
        <taxon>Aliivibrio</taxon>
    </lineage>
</organism>
<proteinExistence type="inferred from homology"/>
<protein>
    <recommendedName>
        <fullName evidence="1">5'-methylthioadenosine/S-adenosylhomocysteine nucleosidase</fullName>
        <shortName evidence="1">MTA/SAH nucleosidase</shortName>
        <shortName evidence="1">MTAN</shortName>
        <ecNumber evidence="1">3.2.2.9</ecNumber>
    </recommendedName>
    <alternativeName>
        <fullName evidence="1">5'-deoxyadenosine nucleosidase</fullName>
        <shortName evidence="1">DOA nucleosidase</shortName>
        <shortName evidence="1">dAdo nucleosidase</shortName>
    </alternativeName>
    <alternativeName>
        <fullName evidence="1">5'-methylthioadenosine nucleosidase</fullName>
        <shortName evidence="1">MTA nucleosidase</shortName>
    </alternativeName>
    <alternativeName>
        <fullName evidence="1">S-adenosylhomocysteine nucleosidase</fullName>
        <shortName evidence="1">AdoHcy nucleosidase</shortName>
        <shortName evidence="1">SAH nucleosidase</shortName>
        <shortName evidence="1">SRH nucleosidase</shortName>
    </alternativeName>
</protein>
<dbReference type="EC" id="3.2.2.9" evidence="1"/>
<dbReference type="EMBL" id="AB087500">
    <property type="protein sequence ID" value="BAF43682.1"/>
    <property type="molecule type" value="Genomic_DNA"/>
</dbReference>
<dbReference type="RefSeq" id="WP_005420787.1">
    <property type="nucleotide sequence ID" value="NZ_WOBN01000031.1"/>
</dbReference>
<dbReference type="SMR" id="A1IGA8"/>
<dbReference type="UniPathway" id="UPA00904">
    <property type="reaction ID" value="UER00871"/>
</dbReference>
<dbReference type="GO" id="GO:0005829">
    <property type="term" value="C:cytosol"/>
    <property type="evidence" value="ECO:0007669"/>
    <property type="project" value="TreeGrafter"/>
</dbReference>
<dbReference type="GO" id="GO:0008782">
    <property type="term" value="F:adenosylhomocysteine nucleosidase activity"/>
    <property type="evidence" value="ECO:0007669"/>
    <property type="project" value="UniProtKB-UniRule"/>
</dbReference>
<dbReference type="GO" id="GO:0008930">
    <property type="term" value="F:methylthioadenosine nucleosidase activity"/>
    <property type="evidence" value="ECO:0007669"/>
    <property type="project" value="UniProtKB-UniRule"/>
</dbReference>
<dbReference type="GO" id="GO:0019509">
    <property type="term" value="P:L-methionine salvage from methylthioadenosine"/>
    <property type="evidence" value="ECO:0007669"/>
    <property type="project" value="UniProtKB-UniRule"/>
</dbReference>
<dbReference type="GO" id="GO:0019284">
    <property type="term" value="P:L-methionine salvage from S-adenosylmethionine"/>
    <property type="evidence" value="ECO:0007669"/>
    <property type="project" value="TreeGrafter"/>
</dbReference>
<dbReference type="GO" id="GO:0009164">
    <property type="term" value="P:nucleoside catabolic process"/>
    <property type="evidence" value="ECO:0007669"/>
    <property type="project" value="InterPro"/>
</dbReference>
<dbReference type="CDD" id="cd09008">
    <property type="entry name" value="MTAN"/>
    <property type="match status" value="1"/>
</dbReference>
<dbReference type="FunFam" id="3.40.50.1580:FF:000001">
    <property type="entry name" value="MTA/SAH nucleosidase family protein"/>
    <property type="match status" value="1"/>
</dbReference>
<dbReference type="Gene3D" id="3.40.50.1580">
    <property type="entry name" value="Nucleoside phosphorylase domain"/>
    <property type="match status" value="1"/>
</dbReference>
<dbReference type="HAMAP" id="MF_01684">
    <property type="entry name" value="Salvage_MtnN"/>
    <property type="match status" value="1"/>
</dbReference>
<dbReference type="InterPro" id="IPR010049">
    <property type="entry name" value="MTA_SAH_Nsdase"/>
</dbReference>
<dbReference type="InterPro" id="IPR000845">
    <property type="entry name" value="Nucleoside_phosphorylase_d"/>
</dbReference>
<dbReference type="InterPro" id="IPR035994">
    <property type="entry name" value="Nucleoside_phosphorylase_sf"/>
</dbReference>
<dbReference type="NCBIfam" id="TIGR01704">
    <property type="entry name" value="MTA_SAH-Nsdase"/>
    <property type="match status" value="1"/>
</dbReference>
<dbReference type="NCBIfam" id="NF004079">
    <property type="entry name" value="PRK05584.1"/>
    <property type="match status" value="1"/>
</dbReference>
<dbReference type="PANTHER" id="PTHR46832">
    <property type="entry name" value="5'-METHYLTHIOADENOSINE/S-ADENOSYLHOMOCYSTEINE NUCLEOSIDASE"/>
    <property type="match status" value="1"/>
</dbReference>
<dbReference type="PANTHER" id="PTHR46832:SF1">
    <property type="entry name" value="5'-METHYLTHIOADENOSINE_S-ADENOSYLHOMOCYSTEINE NUCLEOSIDASE"/>
    <property type="match status" value="1"/>
</dbReference>
<dbReference type="Pfam" id="PF01048">
    <property type="entry name" value="PNP_UDP_1"/>
    <property type="match status" value="1"/>
</dbReference>
<dbReference type="SUPFAM" id="SSF53167">
    <property type="entry name" value="Purine and uridine phosphorylases"/>
    <property type="match status" value="1"/>
</dbReference>
<name>MTNN_ALIFS</name>
<feature type="chain" id="PRO_0000359383" description="5'-methylthioadenosine/S-adenosylhomocysteine nucleosidase">
    <location>
        <begin position="1"/>
        <end position="231"/>
    </location>
</feature>
<feature type="active site" description="Proton acceptor" evidence="1">
    <location>
        <position position="12"/>
    </location>
</feature>
<feature type="active site" description="Proton donor" evidence="1">
    <location>
        <position position="198"/>
    </location>
</feature>
<feature type="binding site" evidence="1">
    <location>
        <position position="78"/>
    </location>
    <ligand>
        <name>substrate</name>
    </ligand>
</feature>
<feature type="binding site" evidence="1">
    <location>
        <position position="153"/>
    </location>
    <ligand>
        <name>substrate</name>
    </ligand>
</feature>
<feature type="binding site" evidence="1">
    <location>
        <begin position="174"/>
        <end position="175"/>
    </location>
    <ligand>
        <name>substrate</name>
    </ligand>
</feature>
<gene>
    <name evidence="1" type="primary">mtnN</name>
</gene>
<reference key="1">
    <citation type="submission" date="2002-07" db="EMBL/GenBank/DDBJ databases">
        <title>Identification of pfs in Vibrio fischeri ATCC 7744.</title>
        <authorList>
            <person name="Kasai S."/>
        </authorList>
    </citation>
    <scope>NUCLEOTIDE SEQUENCE [GENOMIC DNA]</scope>
    <source>
        <strain>ATCC 7744 / DSM 507 / NCIMB 1281 / 398</strain>
    </source>
</reference>
<keyword id="KW-0028">Amino-acid biosynthesis</keyword>
<keyword id="KW-0378">Hydrolase</keyword>
<keyword id="KW-0486">Methionine biosynthesis</keyword>
<accession>A1IGA8</accession>